<dbReference type="EMBL" id="CP000237">
    <property type="protein sequence ID" value="ABD45631.1"/>
    <property type="molecule type" value="Genomic_DNA"/>
</dbReference>
<dbReference type="RefSeq" id="WP_011451662.1">
    <property type="nucleotide sequence ID" value="NC_007798.1"/>
</dbReference>
<dbReference type="SMR" id="Q2GEE0"/>
<dbReference type="STRING" id="222891.NSE_0265"/>
<dbReference type="KEGG" id="nse:NSE_0265"/>
<dbReference type="eggNOG" id="COG0051">
    <property type="taxonomic scope" value="Bacteria"/>
</dbReference>
<dbReference type="HOGENOM" id="CLU_122625_1_3_5"/>
<dbReference type="OrthoDB" id="9804464at2"/>
<dbReference type="Proteomes" id="UP000001942">
    <property type="component" value="Chromosome"/>
</dbReference>
<dbReference type="GO" id="GO:1990904">
    <property type="term" value="C:ribonucleoprotein complex"/>
    <property type="evidence" value="ECO:0007669"/>
    <property type="project" value="UniProtKB-KW"/>
</dbReference>
<dbReference type="GO" id="GO:0005840">
    <property type="term" value="C:ribosome"/>
    <property type="evidence" value="ECO:0007669"/>
    <property type="project" value="UniProtKB-KW"/>
</dbReference>
<dbReference type="GO" id="GO:0003735">
    <property type="term" value="F:structural constituent of ribosome"/>
    <property type="evidence" value="ECO:0007669"/>
    <property type="project" value="InterPro"/>
</dbReference>
<dbReference type="GO" id="GO:0000049">
    <property type="term" value="F:tRNA binding"/>
    <property type="evidence" value="ECO:0007669"/>
    <property type="project" value="UniProtKB-UniRule"/>
</dbReference>
<dbReference type="GO" id="GO:0006412">
    <property type="term" value="P:translation"/>
    <property type="evidence" value="ECO:0007669"/>
    <property type="project" value="UniProtKB-UniRule"/>
</dbReference>
<dbReference type="FunFam" id="3.30.70.600:FF:000003">
    <property type="entry name" value="30S ribosomal protein S10"/>
    <property type="match status" value="1"/>
</dbReference>
<dbReference type="Gene3D" id="3.30.70.600">
    <property type="entry name" value="Ribosomal protein S10 domain"/>
    <property type="match status" value="1"/>
</dbReference>
<dbReference type="HAMAP" id="MF_00508">
    <property type="entry name" value="Ribosomal_uS10"/>
    <property type="match status" value="1"/>
</dbReference>
<dbReference type="InterPro" id="IPR001848">
    <property type="entry name" value="Ribosomal_uS10"/>
</dbReference>
<dbReference type="InterPro" id="IPR018268">
    <property type="entry name" value="Ribosomal_uS10_CS"/>
</dbReference>
<dbReference type="InterPro" id="IPR027486">
    <property type="entry name" value="Ribosomal_uS10_dom"/>
</dbReference>
<dbReference type="InterPro" id="IPR036838">
    <property type="entry name" value="Ribosomal_uS10_dom_sf"/>
</dbReference>
<dbReference type="NCBIfam" id="NF001861">
    <property type="entry name" value="PRK00596.1"/>
    <property type="match status" value="1"/>
</dbReference>
<dbReference type="NCBIfam" id="TIGR01049">
    <property type="entry name" value="rpsJ_bact"/>
    <property type="match status" value="1"/>
</dbReference>
<dbReference type="PANTHER" id="PTHR11700">
    <property type="entry name" value="30S RIBOSOMAL PROTEIN S10 FAMILY MEMBER"/>
    <property type="match status" value="1"/>
</dbReference>
<dbReference type="Pfam" id="PF00338">
    <property type="entry name" value="Ribosomal_S10"/>
    <property type="match status" value="1"/>
</dbReference>
<dbReference type="PRINTS" id="PR00971">
    <property type="entry name" value="RIBOSOMALS10"/>
</dbReference>
<dbReference type="SMART" id="SM01403">
    <property type="entry name" value="Ribosomal_S10"/>
    <property type="match status" value="1"/>
</dbReference>
<dbReference type="SUPFAM" id="SSF54999">
    <property type="entry name" value="Ribosomal protein S10"/>
    <property type="match status" value="1"/>
</dbReference>
<dbReference type="PROSITE" id="PS00361">
    <property type="entry name" value="RIBOSOMAL_S10"/>
    <property type="match status" value="1"/>
</dbReference>
<name>RS10_NEOSM</name>
<feature type="chain" id="PRO_0000237068" description="Small ribosomal subunit protein uS10">
    <location>
        <begin position="1"/>
        <end position="103"/>
    </location>
</feature>
<protein>
    <recommendedName>
        <fullName evidence="1">Small ribosomal subunit protein uS10</fullName>
    </recommendedName>
    <alternativeName>
        <fullName evidence="2">30S ribosomal protein S10</fullName>
    </alternativeName>
</protein>
<sequence>MKKIRIKLKSFDSGILHRSTKEIVMAAKRNGALVSGPIPLPTRVSRYTVNKSPHVDKKSREQFQLAVHKCLLELSSFNAHLLSTFTNFQLPAGVDISVEVRDE</sequence>
<comment type="function">
    <text evidence="1">Involved in the binding of tRNA to the ribosomes.</text>
</comment>
<comment type="subunit">
    <text evidence="1">Part of the 30S ribosomal subunit.</text>
</comment>
<comment type="similarity">
    <text evidence="1">Belongs to the universal ribosomal protein uS10 family.</text>
</comment>
<proteinExistence type="inferred from homology"/>
<evidence type="ECO:0000255" key="1">
    <source>
        <dbReference type="HAMAP-Rule" id="MF_00508"/>
    </source>
</evidence>
<evidence type="ECO:0000305" key="2"/>
<gene>
    <name evidence="1" type="primary">rpsJ</name>
    <name type="ordered locus">NSE_0265</name>
</gene>
<keyword id="KW-0687">Ribonucleoprotein</keyword>
<keyword id="KW-0689">Ribosomal protein</keyword>
<accession>Q2GEE0</accession>
<organism>
    <name type="scientific">Neorickettsia sennetsu (strain ATCC VR-367 / Miyayama)</name>
    <name type="common">Ehrlichia sennetsu</name>
    <dbReference type="NCBI Taxonomy" id="222891"/>
    <lineage>
        <taxon>Bacteria</taxon>
        <taxon>Pseudomonadati</taxon>
        <taxon>Pseudomonadota</taxon>
        <taxon>Alphaproteobacteria</taxon>
        <taxon>Rickettsiales</taxon>
        <taxon>Anaplasmataceae</taxon>
        <taxon>Neorickettsia</taxon>
    </lineage>
</organism>
<reference key="1">
    <citation type="journal article" date="2006" name="PLoS Genet.">
        <title>Comparative genomics of emerging human ehrlichiosis agents.</title>
        <authorList>
            <person name="Dunning Hotopp J.C."/>
            <person name="Lin M."/>
            <person name="Madupu R."/>
            <person name="Crabtree J."/>
            <person name="Angiuoli S.V."/>
            <person name="Eisen J.A."/>
            <person name="Seshadri R."/>
            <person name="Ren Q."/>
            <person name="Wu M."/>
            <person name="Utterback T.R."/>
            <person name="Smith S."/>
            <person name="Lewis M."/>
            <person name="Khouri H."/>
            <person name="Zhang C."/>
            <person name="Niu H."/>
            <person name="Lin Q."/>
            <person name="Ohashi N."/>
            <person name="Zhi N."/>
            <person name="Nelson W.C."/>
            <person name="Brinkac L.M."/>
            <person name="Dodson R.J."/>
            <person name="Rosovitz M.J."/>
            <person name="Sundaram J.P."/>
            <person name="Daugherty S.C."/>
            <person name="Davidsen T."/>
            <person name="Durkin A.S."/>
            <person name="Gwinn M.L."/>
            <person name="Haft D.H."/>
            <person name="Selengut J.D."/>
            <person name="Sullivan S.A."/>
            <person name="Zafar N."/>
            <person name="Zhou L."/>
            <person name="Benahmed F."/>
            <person name="Forberger H."/>
            <person name="Halpin R."/>
            <person name="Mulligan S."/>
            <person name="Robinson J."/>
            <person name="White O."/>
            <person name="Rikihisa Y."/>
            <person name="Tettelin H."/>
        </authorList>
    </citation>
    <scope>NUCLEOTIDE SEQUENCE [LARGE SCALE GENOMIC DNA]</scope>
    <source>
        <strain>ATCC VR-367 / Miyayama</strain>
    </source>
</reference>